<comment type="function">
    <text evidence="1">Catalyzes the formation of methylglyoxal from dihydroxyacetone phosphate.</text>
</comment>
<comment type="catalytic activity">
    <reaction evidence="1">
        <text>dihydroxyacetone phosphate = methylglyoxal + phosphate</text>
        <dbReference type="Rhea" id="RHEA:17937"/>
        <dbReference type="ChEBI" id="CHEBI:17158"/>
        <dbReference type="ChEBI" id="CHEBI:43474"/>
        <dbReference type="ChEBI" id="CHEBI:57642"/>
        <dbReference type="EC" id="4.2.3.3"/>
    </reaction>
</comment>
<comment type="similarity">
    <text evidence="1">Belongs to the methylglyoxal synthase family.</text>
</comment>
<reference key="1">
    <citation type="submission" date="2008-02" db="EMBL/GenBank/DDBJ databases">
        <title>Complete sequence of chromosome 1 of Burkholderia cenocepacia MC0-3.</title>
        <authorList>
            <person name="Copeland A."/>
            <person name="Lucas S."/>
            <person name="Lapidus A."/>
            <person name="Barry K."/>
            <person name="Bruce D."/>
            <person name="Goodwin L."/>
            <person name="Glavina del Rio T."/>
            <person name="Dalin E."/>
            <person name="Tice H."/>
            <person name="Pitluck S."/>
            <person name="Chain P."/>
            <person name="Malfatti S."/>
            <person name="Shin M."/>
            <person name="Vergez L."/>
            <person name="Schmutz J."/>
            <person name="Larimer F."/>
            <person name="Land M."/>
            <person name="Hauser L."/>
            <person name="Kyrpides N."/>
            <person name="Mikhailova N."/>
            <person name="Tiedje J."/>
            <person name="Richardson P."/>
        </authorList>
    </citation>
    <scope>NUCLEOTIDE SEQUENCE [LARGE SCALE GENOMIC DNA]</scope>
    <source>
        <strain>MC0-3</strain>
    </source>
</reference>
<proteinExistence type="inferred from homology"/>
<keyword id="KW-0456">Lyase</keyword>
<accession>B1JW38</accession>
<evidence type="ECO:0000255" key="1">
    <source>
        <dbReference type="HAMAP-Rule" id="MF_00549"/>
    </source>
</evidence>
<organism>
    <name type="scientific">Burkholderia orbicola (strain MC0-3)</name>
    <dbReference type="NCBI Taxonomy" id="406425"/>
    <lineage>
        <taxon>Bacteria</taxon>
        <taxon>Pseudomonadati</taxon>
        <taxon>Pseudomonadota</taxon>
        <taxon>Betaproteobacteria</taxon>
        <taxon>Burkholderiales</taxon>
        <taxon>Burkholderiaceae</taxon>
        <taxon>Burkholderia</taxon>
        <taxon>Burkholderia cepacia complex</taxon>
        <taxon>Burkholderia orbicola</taxon>
    </lineage>
</organism>
<gene>
    <name evidence="1" type="primary">mgsA</name>
    <name type="ordered locus">Bcenmc03_2314</name>
</gene>
<dbReference type="EC" id="4.2.3.3" evidence="1"/>
<dbReference type="EMBL" id="CP000958">
    <property type="protein sequence ID" value="ACA91475.1"/>
    <property type="molecule type" value="Genomic_DNA"/>
</dbReference>
<dbReference type="RefSeq" id="WP_006478230.1">
    <property type="nucleotide sequence ID" value="NC_010508.1"/>
</dbReference>
<dbReference type="SMR" id="B1JW38"/>
<dbReference type="GeneID" id="83049103"/>
<dbReference type="KEGG" id="bcm:Bcenmc03_2314"/>
<dbReference type="HOGENOM" id="CLU_120420_1_0_4"/>
<dbReference type="Proteomes" id="UP000002169">
    <property type="component" value="Chromosome 1"/>
</dbReference>
<dbReference type="GO" id="GO:0005829">
    <property type="term" value="C:cytosol"/>
    <property type="evidence" value="ECO:0007669"/>
    <property type="project" value="TreeGrafter"/>
</dbReference>
<dbReference type="GO" id="GO:0008929">
    <property type="term" value="F:methylglyoxal synthase activity"/>
    <property type="evidence" value="ECO:0007669"/>
    <property type="project" value="UniProtKB-UniRule"/>
</dbReference>
<dbReference type="GO" id="GO:0019242">
    <property type="term" value="P:methylglyoxal biosynthetic process"/>
    <property type="evidence" value="ECO:0007669"/>
    <property type="project" value="UniProtKB-UniRule"/>
</dbReference>
<dbReference type="CDD" id="cd01422">
    <property type="entry name" value="MGS"/>
    <property type="match status" value="1"/>
</dbReference>
<dbReference type="Gene3D" id="3.40.50.1380">
    <property type="entry name" value="Methylglyoxal synthase-like domain"/>
    <property type="match status" value="1"/>
</dbReference>
<dbReference type="HAMAP" id="MF_00549">
    <property type="entry name" value="Methylglyoxal_synth"/>
    <property type="match status" value="1"/>
</dbReference>
<dbReference type="InterPro" id="IPR004363">
    <property type="entry name" value="Methylgl_synth"/>
</dbReference>
<dbReference type="InterPro" id="IPR018148">
    <property type="entry name" value="Methylglyoxal_synth_AS"/>
</dbReference>
<dbReference type="InterPro" id="IPR011607">
    <property type="entry name" value="MGS-like_dom"/>
</dbReference>
<dbReference type="InterPro" id="IPR036914">
    <property type="entry name" value="MGS-like_dom_sf"/>
</dbReference>
<dbReference type="NCBIfam" id="TIGR00160">
    <property type="entry name" value="MGSA"/>
    <property type="match status" value="1"/>
</dbReference>
<dbReference type="NCBIfam" id="NF003559">
    <property type="entry name" value="PRK05234.1"/>
    <property type="match status" value="1"/>
</dbReference>
<dbReference type="PANTHER" id="PTHR30492">
    <property type="entry name" value="METHYLGLYOXAL SYNTHASE"/>
    <property type="match status" value="1"/>
</dbReference>
<dbReference type="PANTHER" id="PTHR30492:SF0">
    <property type="entry name" value="METHYLGLYOXAL SYNTHASE"/>
    <property type="match status" value="1"/>
</dbReference>
<dbReference type="Pfam" id="PF02142">
    <property type="entry name" value="MGS"/>
    <property type="match status" value="1"/>
</dbReference>
<dbReference type="PIRSF" id="PIRSF006614">
    <property type="entry name" value="Methylglyox_syn"/>
    <property type="match status" value="1"/>
</dbReference>
<dbReference type="SMART" id="SM00851">
    <property type="entry name" value="MGS"/>
    <property type="match status" value="1"/>
</dbReference>
<dbReference type="SUPFAM" id="SSF52335">
    <property type="entry name" value="Methylglyoxal synthase-like"/>
    <property type="match status" value="1"/>
</dbReference>
<dbReference type="PROSITE" id="PS01335">
    <property type="entry name" value="METHYLGLYOXAL_SYNTH"/>
    <property type="match status" value="1"/>
</dbReference>
<dbReference type="PROSITE" id="PS51855">
    <property type="entry name" value="MGS"/>
    <property type="match status" value="1"/>
</dbReference>
<name>MGSA_BURO0</name>
<sequence length="130" mass="13849">MSKPRIALIAHDAKKDEIVALAGQYRETLAQCRLVATGTTGGRIAAAHGLEVERKLSGPLGGDLQIGAELADGRVDIVVFLRDPMTAQPHDPDITALVRACDVHDVPVATNVATARMLLDDLARNMQDVC</sequence>
<protein>
    <recommendedName>
        <fullName evidence="1">Methylglyoxal synthase</fullName>
        <shortName evidence="1">MGS</shortName>
        <ecNumber evidence="1">4.2.3.3</ecNumber>
    </recommendedName>
</protein>
<feature type="chain" id="PRO_1000128981" description="Methylglyoxal synthase">
    <location>
        <begin position="1"/>
        <end position="130"/>
    </location>
</feature>
<feature type="domain" description="MGS-like" evidence="1">
    <location>
        <begin position="1"/>
        <end position="130"/>
    </location>
</feature>
<feature type="active site" description="Proton donor/acceptor" evidence="1">
    <location>
        <position position="63"/>
    </location>
</feature>
<feature type="binding site" evidence="1">
    <location>
        <position position="11"/>
    </location>
    <ligand>
        <name>substrate</name>
    </ligand>
</feature>
<feature type="binding site" evidence="1">
    <location>
        <position position="15"/>
    </location>
    <ligand>
        <name>substrate</name>
    </ligand>
</feature>
<feature type="binding site" evidence="1">
    <location>
        <begin position="37"/>
        <end position="40"/>
    </location>
    <ligand>
        <name>substrate</name>
    </ligand>
</feature>
<feature type="binding site" evidence="1">
    <location>
        <begin position="57"/>
        <end position="58"/>
    </location>
    <ligand>
        <name>substrate</name>
    </ligand>
</feature>
<feature type="binding site" evidence="1">
    <location>
        <position position="90"/>
    </location>
    <ligand>
        <name>substrate</name>
    </ligand>
</feature>